<keyword id="KW-0150">Chloroplast</keyword>
<keyword id="KW-0472">Membrane</keyword>
<keyword id="KW-0602">Photosynthesis</keyword>
<keyword id="KW-0934">Plastid</keyword>
<keyword id="KW-0793">Thylakoid</keyword>
<keyword id="KW-0812">Transmembrane</keyword>
<keyword id="KW-1133">Transmembrane helix</keyword>
<accession>A4QL30</accession>
<name>YCF4_DRANE</name>
<comment type="function">
    <text evidence="1">Seems to be required for the assembly of the photosystem I complex.</text>
</comment>
<comment type="subcellular location">
    <subcellularLocation>
        <location evidence="1">Plastid</location>
        <location evidence="1">Chloroplast thylakoid membrane</location>
        <topology evidence="1">Multi-pass membrane protein</topology>
    </subcellularLocation>
</comment>
<comment type="similarity">
    <text evidence="1">Belongs to the Ycf4 family.</text>
</comment>
<sequence>MSWRSESIWIEFITGSRKTSNFCWAFILFLGSLGFLLVGTSSYLGRNFISLFASQQIIFFPQGIVMSFYGIAGLFISCYLWCTILWNVGSGYDLFDRKEGIVRIFRWGFPGKSRRIFLRFLMKDIQSIRIEVKEGVSARRVLYMEIRGQGAIPLIRTDENFTTREIEQKAAELAYFLRVPIEVF</sequence>
<protein>
    <recommendedName>
        <fullName evidence="1">Photosystem I assembly protein Ycf4</fullName>
    </recommendedName>
</protein>
<organism>
    <name type="scientific">Draba nemorosa</name>
    <name type="common">Woodland whitlowgrass</name>
    <dbReference type="NCBI Taxonomy" id="171822"/>
    <lineage>
        <taxon>Eukaryota</taxon>
        <taxon>Viridiplantae</taxon>
        <taxon>Streptophyta</taxon>
        <taxon>Embryophyta</taxon>
        <taxon>Tracheophyta</taxon>
        <taxon>Spermatophyta</taxon>
        <taxon>Magnoliopsida</taxon>
        <taxon>eudicotyledons</taxon>
        <taxon>Gunneridae</taxon>
        <taxon>Pentapetalae</taxon>
        <taxon>rosids</taxon>
        <taxon>malvids</taxon>
        <taxon>Brassicales</taxon>
        <taxon>Brassicaceae</taxon>
        <taxon>Arabideae</taxon>
        <taxon>Draba</taxon>
    </lineage>
</organism>
<feature type="chain" id="PRO_0000326009" description="Photosystem I assembly protein Ycf4">
    <location>
        <begin position="1"/>
        <end position="184"/>
    </location>
</feature>
<feature type="transmembrane region" description="Helical" evidence="1">
    <location>
        <begin position="22"/>
        <end position="42"/>
    </location>
</feature>
<feature type="transmembrane region" description="Helical" evidence="1">
    <location>
        <begin position="57"/>
        <end position="77"/>
    </location>
</feature>
<evidence type="ECO:0000255" key="1">
    <source>
        <dbReference type="HAMAP-Rule" id="MF_00437"/>
    </source>
</evidence>
<gene>
    <name evidence="1" type="primary">ycf4</name>
</gene>
<dbReference type="EMBL" id="AP009373">
    <property type="protein sequence ID" value="BAF50385.1"/>
    <property type="molecule type" value="Genomic_DNA"/>
</dbReference>
<dbReference type="RefSeq" id="YP_001123561.1">
    <property type="nucleotide sequence ID" value="NC_009272.1"/>
</dbReference>
<dbReference type="GeneID" id="4964744"/>
<dbReference type="GO" id="GO:0009535">
    <property type="term" value="C:chloroplast thylakoid membrane"/>
    <property type="evidence" value="ECO:0007669"/>
    <property type="project" value="UniProtKB-SubCell"/>
</dbReference>
<dbReference type="GO" id="GO:0009522">
    <property type="term" value="C:photosystem I"/>
    <property type="evidence" value="ECO:0007669"/>
    <property type="project" value="InterPro"/>
</dbReference>
<dbReference type="GO" id="GO:0015979">
    <property type="term" value="P:photosynthesis"/>
    <property type="evidence" value="ECO:0007669"/>
    <property type="project" value="UniProtKB-UniRule"/>
</dbReference>
<dbReference type="HAMAP" id="MF_00437">
    <property type="entry name" value="Ycf4"/>
    <property type="match status" value="1"/>
</dbReference>
<dbReference type="InterPro" id="IPR003359">
    <property type="entry name" value="PSI_Ycf4_assembly"/>
</dbReference>
<dbReference type="PANTHER" id="PTHR33288">
    <property type="match status" value="1"/>
</dbReference>
<dbReference type="PANTHER" id="PTHR33288:SF4">
    <property type="entry name" value="PHOTOSYSTEM I ASSEMBLY PROTEIN YCF4"/>
    <property type="match status" value="1"/>
</dbReference>
<dbReference type="Pfam" id="PF02392">
    <property type="entry name" value="Ycf4"/>
    <property type="match status" value="1"/>
</dbReference>
<reference key="1">
    <citation type="submission" date="2007-03" db="EMBL/GenBank/DDBJ databases">
        <title>Sequencing analysis of Draba nemoroza chloroplast DNA.</title>
        <authorList>
            <person name="Hosouchi T."/>
            <person name="Tsuruoka H."/>
            <person name="Kotani H."/>
        </authorList>
    </citation>
    <scope>NUCLEOTIDE SEQUENCE [LARGE SCALE GENOMIC DNA]</scope>
</reference>
<geneLocation type="chloroplast"/>
<proteinExistence type="inferred from homology"/>